<evidence type="ECO:0000250" key="1"/>
<evidence type="ECO:0000269" key="2">
    <source>
    </source>
</evidence>
<evidence type="ECO:0000305" key="3"/>
<evidence type="ECO:0007829" key="4">
    <source>
        <dbReference type="PDB" id="8BOQ"/>
    </source>
</evidence>
<accession>P16266</accession>
<feature type="initiator methionine" description="Removed" evidence="2">
    <location>
        <position position="1"/>
    </location>
</feature>
<feature type="chain" id="PRO_0000153059" description="Nitrogenase iron-iron protein alpha chain">
    <location>
        <begin position="2"/>
        <end position="518"/>
    </location>
</feature>
<feature type="binding site" evidence="1">
    <location>
        <position position="49"/>
    </location>
    <ligand>
        <name>[8Fe-7S] cluster</name>
        <dbReference type="ChEBI" id="CHEBI:21143"/>
        <note>ligand shared with beta chain</note>
    </ligand>
</feature>
<feature type="binding site" evidence="1">
    <location>
        <position position="75"/>
    </location>
    <ligand>
        <name>[8Fe-7S] cluster</name>
        <dbReference type="ChEBI" id="CHEBI:21143"/>
        <note>ligand shared with beta chain</note>
    </ligand>
</feature>
<feature type="binding site" evidence="1">
    <location>
        <position position="138"/>
    </location>
    <ligand>
        <name>[8Fe-7S] cluster</name>
        <dbReference type="ChEBI" id="CHEBI:21143"/>
        <note>ligand shared with beta chain</note>
    </ligand>
</feature>
<feature type="binding site" evidence="1">
    <location>
        <position position="257"/>
    </location>
    <ligand>
        <name>[8Fe-9S-C-homocitryl] cluster</name>
        <dbReference type="ChEBI" id="CHEBI:60504"/>
    </ligand>
</feature>
<feature type="binding site" evidence="1">
    <location>
        <position position="423"/>
    </location>
    <ligand>
        <name>[8Fe-9S-C-homocitryl] cluster</name>
        <dbReference type="ChEBI" id="CHEBI:60504"/>
    </ligand>
</feature>
<feature type="sequence conflict" description="In Ref. 2; AA sequence." evidence="3" ref="2">
    <original>H</original>
    <variation>E</variation>
    <location>
        <position position="4"/>
    </location>
</feature>
<feature type="helix" evidence="4">
    <location>
        <begin position="7"/>
        <end position="9"/>
    </location>
</feature>
<feature type="helix" evidence="4">
    <location>
        <begin position="13"/>
        <end position="18"/>
    </location>
</feature>
<feature type="strand" evidence="4">
    <location>
        <begin position="19"/>
        <end position="21"/>
    </location>
</feature>
<feature type="turn" evidence="4">
    <location>
        <begin position="28"/>
        <end position="30"/>
    </location>
</feature>
<feature type="helix" evidence="4">
    <location>
        <begin position="50"/>
        <end position="54"/>
    </location>
</feature>
<feature type="helix" evidence="4">
    <location>
        <begin position="55"/>
        <end position="59"/>
    </location>
</feature>
<feature type="strand" evidence="4">
    <location>
        <begin position="65"/>
        <end position="71"/>
    </location>
</feature>
<feature type="helix" evidence="4">
    <location>
        <begin position="73"/>
        <end position="77"/>
    </location>
</feature>
<feature type="turn" evidence="4">
    <location>
        <begin position="78"/>
        <end position="81"/>
    </location>
</feature>
<feature type="turn" evidence="4">
    <location>
        <begin position="88"/>
        <end position="91"/>
    </location>
</feature>
<feature type="helix" evidence="4">
    <location>
        <begin position="92"/>
        <end position="95"/>
    </location>
</feature>
<feature type="helix" evidence="4">
    <location>
        <begin position="105"/>
        <end position="109"/>
    </location>
</feature>
<feature type="helix" evidence="4">
    <location>
        <begin position="112"/>
        <end position="125"/>
    </location>
</feature>
<feature type="strand" evidence="4">
    <location>
        <begin position="131"/>
        <end position="136"/>
    </location>
</feature>
<feature type="helix" evidence="4">
    <location>
        <begin position="138"/>
        <end position="143"/>
    </location>
</feature>
<feature type="helix" evidence="4">
    <location>
        <begin position="147"/>
        <end position="157"/>
    </location>
</feature>
<feature type="strand" evidence="4">
    <location>
        <begin position="162"/>
        <end position="166"/>
    </location>
</feature>
<feature type="strand" evidence="4">
    <location>
        <begin position="172"/>
        <end position="176"/>
    </location>
</feature>
<feature type="helix" evidence="4">
    <location>
        <begin position="177"/>
        <end position="190"/>
    </location>
</feature>
<feature type="turn" evidence="4">
    <location>
        <begin position="191"/>
        <end position="193"/>
    </location>
</feature>
<feature type="strand" evidence="4">
    <location>
        <begin position="204"/>
        <end position="210"/>
    </location>
</feature>
<feature type="helix" evidence="4">
    <location>
        <begin position="216"/>
        <end position="225"/>
    </location>
</feature>
<feature type="turn" evidence="4">
    <location>
        <begin position="226"/>
        <end position="228"/>
    </location>
</feature>
<feature type="strand" evidence="4">
    <location>
        <begin position="230"/>
        <end position="236"/>
    </location>
</feature>
<feature type="helix" evidence="4">
    <location>
        <begin position="241"/>
        <end position="244"/>
    </location>
</feature>
<feature type="helix" evidence="4">
    <location>
        <begin position="245"/>
        <end position="249"/>
    </location>
</feature>
<feature type="strand" evidence="4">
    <location>
        <begin position="251"/>
        <end position="256"/>
    </location>
</feature>
<feature type="helix" evidence="4">
    <location>
        <begin position="258"/>
        <end position="272"/>
    </location>
</feature>
<feature type="strand" evidence="4">
    <location>
        <begin position="276"/>
        <end position="278"/>
    </location>
</feature>
<feature type="helix" evidence="4">
    <location>
        <begin position="284"/>
        <end position="297"/>
    </location>
</feature>
<feature type="helix" evidence="4">
    <location>
        <begin position="301"/>
        <end position="326"/>
    </location>
</feature>
<feature type="strand" evidence="4">
    <location>
        <begin position="330"/>
        <end position="333"/>
    </location>
</feature>
<feature type="helix" evidence="4">
    <location>
        <begin position="339"/>
        <end position="343"/>
    </location>
</feature>
<feature type="helix" evidence="4">
    <location>
        <begin position="346"/>
        <end position="351"/>
    </location>
</feature>
<feature type="strand" evidence="4">
    <location>
        <begin position="354"/>
        <end position="362"/>
    </location>
</feature>
<feature type="helix" evidence="4">
    <location>
        <begin position="365"/>
        <end position="374"/>
    </location>
</feature>
<feature type="strand" evidence="4">
    <location>
        <begin position="380"/>
        <end position="384"/>
    </location>
</feature>
<feature type="helix" evidence="4">
    <location>
        <begin position="387"/>
        <end position="397"/>
    </location>
</feature>
<feature type="strand" evidence="4">
    <location>
        <begin position="400"/>
        <end position="404"/>
    </location>
</feature>
<feature type="helix" evidence="4">
    <location>
        <begin position="406"/>
        <end position="414"/>
    </location>
</feature>
<feature type="strand" evidence="4">
    <location>
        <begin position="419"/>
        <end position="421"/>
    </location>
</feature>
<feature type="turn" evidence="4">
    <location>
        <begin position="422"/>
        <end position="424"/>
    </location>
</feature>
<feature type="helix" evidence="4">
    <location>
        <begin position="432"/>
        <end position="447"/>
    </location>
</feature>
<feature type="helix" evidence="4">
    <location>
        <begin position="450"/>
        <end position="455"/>
    </location>
</feature>
<feature type="helix" evidence="4">
    <location>
        <begin position="474"/>
        <end position="478"/>
    </location>
</feature>
<feature type="helix" evidence="4">
    <location>
        <begin position="484"/>
        <end position="488"/>
    </location>
</feature>
<feature type="helix" evidence="4">
    <location>
        <begin position="503"/>
        <end position="506"/>
    </location>
</feature>
<name>ANFD_AZOVI</name>
<dbReference type="EC" id="1.18.6.1"/>
<dbReference type="EMBL" id="M23528">
    <property type="protein sequence ID" value="AAA82509.1"/>
    <property type="molecule type" value="Genomic_DNA"/>
</dbReference>
<dbReference type="PIR" id="B32057">
    <property type="entry name" value="B32057"/>
</dbReference>
<dbReference type="PDB" id="8BOQ">
    <property type="method" value="X-ray"/>
    <property type="resolution" value="1.55 A"/>
    <property type="chains" value="A/D=2-516"/>
</dbReference>
<dbReference type="PDBsum" id="8BOQ"/>
<dbReference type="SMR" id="P16266"/>
<dbReference type="BioCyc" id="MetaCyc:MONOMER-16520"/>
<dbReference type="GO" id="GO:0005524">
    <property type="term" value="F:ATP binding"/>
    <property type="evidence" value="ECO:0007669"/>
    <property type="project" value="UniProtKB-KW"/>
</dbReference>
<dbReference type="GO" id="GO:0051536">
    <property type="term" value="F:iron-sulfur cluster binding"/>
    <property type="evidence" value="ECO:0007669"/>
    <property type="project" value="UniProtKB-KW"/>
</dbReference>
<dbReference type="GO" id="GO:0046872">
    <property type="term" value="F:metal ion binding"/>
    <property type="evidence" value="ECO:0007669"/>
    <property type="project" value="UniProtKB-KW"/>
</dbReference>
<dbReference type="GO" id="GO:0016163">
    <property type="term" value="F:nitrogenase activity"/>
    <property type="evidence" value="ECO:0007669"/>
    <property type="project" value="UniProtKB-EC"/>
</dbReference>
<dbReference type="GO" id="GO:0009399">
    <property type="term" value="P:nitrogen fixation"/>
    <property type="evidence" value="ECO:0007669"/>
    <property type="project" value="UniProtKB-KW"/>
</dbReference>
<dbReference type="CDD" id="cd01977">
    <property type="entry name" value="Nitrogenase_VFe_alpha"/>
    <property type="match status" value="1"/>
</dbReference>
<dbReference type="Gene3D" id="3.40.50.1980">
    <property type="entry name" value="Nitrogenase molybdenum iron protein domain"/>
    <property type="match status" value="3"/>
</dbReference>
<dbReference type="InterPro" id="IPR000510">
    <property type="entry name" value="Nase/OxRdtase_comp1"/>
</dbReference>
<dbReference type="InterPro" id="IPR005974">
    <property type="entry name" value="Nase_asu"/>
</dbReference>
<dbReference type="InterPro" id="IPR010143">
    <property type="entry name" value="Nase_comp1_asu"/>
</dbReference>
<dbReference type="InterPro" id="IPR000318">
    <property type="entry name" value="Nase_comp1_CS"/>
</dbReference>
<dbReference type="InterPro" id="IPR011290">
    <property type="entry name" value="Nase_Fe-Fe_asu"/>
</dbReference>
<dbReference type="NCBIfam" id="TIGR01284">
    <property type="entry name" value="alt_nitrog_alph"/>
    <property type="match status" value="1"/>
</dbReference>
<dbReference type="NCBIfam" id="TIGR01861">
    <property type="entry name" value="ANFD"/>
    <property type="match status" value="1"/>
</dbReference>
<dbReference type="NCBIfam" id="TIGR01862">
    <property type="entry name" value="N2-ase-Ialpha"/>
    <property type="match status" value="1"/>
</dbReference>
<dbReference type="PANTHER" id="PTHR43457">
    <property type="entry name" value="NITROGENASE MOLYBDENUM-IRON PROTEIN ALPHA CHAIN"/>
    <property type="match status" value="1"/>
</dbReference>
<dbReference type="PANTHER" id="PTHR43457:SF1">
    <property type="entry name" value="NITROGENASE MOLYBDENUM-IRON PROTEIN ALPHA CHAIN"/>
    <property type="match status" value="1"/>
</dbReference>
<dbReference type="Pfam" id="PF00148">
    <property type="entry name" value="Oxidored_nitro"/>
    <property type="match status" value="1"/>
</dbReference>
<dbReference type="SUPFAM" id="SSF53807">
    <property type="entry name" value="Helical backbone' metal receptor"/>
    <property type="match status" value="1"/>
</dbReference>
<dbReference type="PROSITE" id="PS00699">
    <property type="entry name" value="NITROGENASE_1_1"/>
    <property type="match status" value="1"/>
</dbReference>
<dbReference type="PROSITE" id="PS00090">
    <property type="entry name" value="NITROGENASE_1_2"/>
    <property type="match status" value="1"/>
</dbReference>
<proteinExistence type="evidence at protein level"/>
<sequence length="518" mass="58414">MPHHEFECSKVIPERKKHAVIKGKGETLADALPQGYLNTIPGSISERGCAYCGAKHVIGTPMKDVIHISHGPVGCTYDTWQTKRYISDNDNFQLKYTYATDVKEKHIVFGAEKLLKQNIIEAFKAFPQIKRMTIYQTCATALIGDDINAIAEEVMEEMPEVDIFVCNSPGFAGPSQSGGHHKINIAWINQKVGTVEPEITGDHVINYVGEYNIQGDQEVMVDYFKRMGIQVLSTFTGNGSYDGLRAMHRAHLNVLECARSAEYICNELRVRYGIPRLDIDGFGFKPLADSLRKIGMFFGIEDRAKAIIDEEVARWKPELDWYKERLMGKKVCLWPGGSKLWHWAHVIEEEMGLKVVSVYIKFGHQGDMEKGIARCGEGTLAIDDPNELEGLEALEMLKPDIILTGKRPGEVAKKVRVPYLNAHAYHNGPYKGFEGWVRFARDIYNAIYSPIHQLSGIDITKDNAPEWGNGFRTRQMLSDGNLSDAVRNSETLRQYTGGYDSVSKLREREYPAFERKVG</sequence>
<keyword id="KW-0002">3D-structure</keyword>
<keyword id="KW-0067">ATP-binding</keyword>
<keyword id="KW-0903">Direct protein sequencing</keyword>
<keyword id="KW-0408">Iron</keyword>
<keyword id="KW-0411">Iron-sulfur</keyword>
<keyword id="KW-0479">Metal-binding</keyword>
<keyword id="KW-0535">Nitrogen fixation</keyword>
<keyword id="KW-0547">Nucleotide-binding</keyword>
<keyword id="KW-0560">Oxidoreductase</keyword>
<comment type="function">
    <text>This iron-iron protein is part of the nitrogenase complex that catalyzes the key enzymatic reactions in nitrogen fixation. Other nitrogenase complexes utilize a molybdenum-iron protein or a vanadium-iron protein.</text>
</comment>
<comment type="catalytic activity">
    <reaction>
        <text>N2 + 8 reduced [2Fe-2S]-[ferredoxin] + 16 ATP + 16 H2O = H2 + 8 oxidized [2Fe-2S]-[ferredoxin] + 2 NH4(+) + 16 ADP + 16 phosphate + 6 H(+)</text>
        <dbReference type="Rhea" id="RHEA:21448"/>
        <dbReference type="Rhea" id="RHEA-COMP:10000"/>
        <dbReference type="Rhea" id="RHEA-COMP:10001"/>
        <dbReference type="ChEBI" id="CHEBI:15377"/>
        <dbReference type="ChEBI" id="CHEBI:15378"/>
        <dbReference type="ChEBI" id="CHEBI:17997"/>
        <dbReference type="ChEBI" id="CHEBI:18276"/>
        <dbReference type="ChEBI" id="CHEBI:28938"/>
        <dbReference type="ChEBI" id="CHEBI:30616"/>
        <dbReference type="ChEBI" id="CHEBI:33737"/>
        <dbReference type="ChEBI" id="CHEBI:33738"/>
        <dbReference type="ChEBI" id="CHEBI:43474"/>
        <dbReference type="ChEBI" id="CHEBI:456216"/>
        <dbReference type="EC" id="1.18.6.1"/>
    </reaction>
</comment>
<comment type="cofactor">
    <cofactor evidence="1">
        <name>[8Fe-7S] cluster</name>
        <dbReference type="ChEBI" id="CHEBI:21143"/>
    </cofactor>
    <text evidence="1">Binds 1 [8Fe-7S] cluster per heterodimer.</text>
</comment>
<comment type="cofactor">
    <cofactor evidence="1">
        <name>[8Fe-9S-C-homocitryl] cluster</name>
        <dbReference type="ChEBI" id="CHEBI:60504"/>
    </cofactor>
    <text evidence="1">Binds 1 [8Fe-9S-C-homocitryl] cluster per subunit.</text>
</comment>
<comment type="subunit">
    <text>Hexamer of two alpha, two beta, and two delta chains.</text>
</comment>
<comment type="miscellaneous">
    <text>The structure of the 8Fe-9S-C-homocitryl cluster is assumed to be analogous to the 7Fe-Mo-9S-C-homocitryl cluster.</text>
</comment>
<comment type="similarity">
    <text evidence="3">Belongs to the NifD/NifK/NifE/NifN family.</text>
</comment>
<gene>
    <name type="primary">anfD</name>
</gene>
<reference key="1">
    <citation type="journal article" date="1989" name="J. Bacteriol.">
        <title>Nucleotide sequence and mutational analysis of the structural genes (anfHDGK) for the second alternative nitrogenase from Azotobacter vinelandii.</title>
        <authorList>
            <person name="Joerger R.D."/>
            <person name="Jacobson M.R."/>
            <person name="Premakumar R."/>
            <person name="Wolfinger E.D."/>
            <person name="Bishop P.E."/>
        </authorList>
    </citation>
    <scope>NUCLEOTIDE SEQUENCE [GENOMIC DNA]</scope>
</reference>
<reference key="2">
    <citation type="journal article" date="1993" name="Biochem. J.">
        <title>Molybdenum-independent nitrogenases of Azotobacter vinelandii: a functional species of alternative nitrogenase-3 isolated from a molybdenum-tolerant strain contains an iron-molybdenum cofactor.</title>
        <authorList>
            <person name="Pau R.N."/>
            <person name="Eldridge M.E."/>
            <person name="Lowe D.J."/>
            <person name="Mitchenall L.A."/>
            <person name="Eady R.R."/>
        </authorList>
    </citation>
    <scope>PROTEIN SEQUENCE OF 2-7</scope>
    <source>
        <strain>RP306</strain>
    </source>
</reference>
<protein>
    <recommendedName>
        <fullName>Nitrogenase iron-iron protein alpha chain</fullName>
        <ecNumber>1.18.6.1</ecNumber>
    </recommendedName>
    <alternativeName>
        <fullName>Dinitrogenase 3 subunit alpha</fullName>
    </alternativeName>
    <alternativeName>
        <fullName>Nitrogenase component I</fullName>
    </alternativeName>
</protein>
<organism>
    <name type="scientific">Azotobacter vinelandii</name>
    <dbReference type="NCBI Taxonomy" id="354"/>
    <lineage>
        <taxon>Bacteria</taxon>
        <taxon>Pseudomonadati</taxon>
        <taxon>Pseudomonadota</taxon>
        <taxon>Gammaproteobacteria</taxon>
        <taxon>Pseudomonadales</taxon>
        <taxon>Pseudomonadaceae</taxon>
        <taxon>Azotobacter</taxon>
    </lineage>
</organism>